<evidence type="ECO:0000255" key="1"/>
<evidence type="ECO:0000269" key="2">
    <source>
    </source>
</evidence>
<evidence type="ECO:0000303" key="3">
    <source>
    </source>
</evidence>
<evidence type="ECO:0000305" key="4"/>
<evidence type="ECO:0000305" key="5">
    <source>
    </source>
</evidence>
<accession>P0CV14</accession>
<keyword id="KW-1035">Host cytoplasm</keyword>
<keyword id="KW-1048">Host nucleus</keyword>
<keyword id="KW-0964">Secreted</keyword>
<keyword id="KW-0732">Signal</keyword>
<keyword id="KW-0843">Virulence</keyword>
<protein>
    <recommendedName>
        <fullName evidence="3">Secreted RxLR effector protein 48</fullName>
    </recommendedName>
</protein>
<feature type="signal peptide" evidence="1">
    <location>
        <begin position="1"/>
        <end position="27"/>
    </location>
</feature>
<feature type="chain" id="PRO_0000447923" description="Secreted RxLR effector protein 48">
    <location>
        <begin position="28"/>
        <end position="197"/>
    </location>
</feature>
<feature type="short sequence motif" description="RxLR-dEER" evidence="5">
    <location>
        <begin position="58"/>
        <end position="79"/>
    </location>
</feature>
<reference key="1">
    <citation type="journal article" date="2018" name="Front. Plant Sci.">
        <title>In planta functional analysis and subcellular localization of the oomycete pathogen Plasmopara viticola candidate RXLR effector repertoire.</title>
        <authorList>
            <person name="Liu Y."/>
            <person name="Lan X."/>
            <person name="Song S."/>
            <person name="Yin L."/>
            <person name="Dry I.B."/>
            <person name="Qu J."/>
            <person name="Xiang J."/>
            <person name="Lu J."/>
        </authorList>
    </citation>
    <scope>NUCLEOTIDE SEQUENCE [MRNA]</scope>
    <scope>DOMAIN</scope>
    <scope>FUNCTION</scope>
    <scope>SUBCELLULAR LOCATION</scope>
</reference>
<comment type="function">
    <text evidence="2">Secreted effector that completely suppresses the host cell death induced by cell death-inducing proteins.</text>
</comment>
<comment type="subcellular location">
    <subcellularLocation>
        <location evidence="2">Secreted</location>
    </subcellularLocation>
    <subcellularLocation>
        <location evidence="2">Host nucleus</location>
    </subcellularLocation>
    <subcellularLocation>
        <location evidence="2">Host cytoplasm</location>
    </subcellularLocation>
</comment>
<comment type="domain">
    <text evidence="5">The RxLR-dEER motif acts to carry the protein into the host cell cytoplasm through binding to cell surface phosphatidylinositol-3-phosphate.</text>
</comment>
<comment type="similarity">
    <text evidence="4">Belongs to the RxLR effector family.</text>
</comment>
<proteinExistence type="evidence at transcript level"/>
<gene>
    <name evidence="3" type="primary">RXLR48</name>
</gene>
<organism>
    <name type="scientific">Plasmopara viticola</name>
    <name type="common">Downy mildew of grapevine</name>
    <name type="synonym">Botrytis viticola</name>
    <dbReference type="NCBI Taxonomy" id="143451"/>
    <lineage>
        <taxon>Eukaryota</taxon>
        <taxon>Sar</taxon>
        <taxon>Stramenopiles</taxon>
        <taxon>Oomycota</taxon>
        <taxon>Peronosporales</taxon>
        <taxon>Peronosporaceae</taxon>
        <taxon>Plasmopara</taxon>
    </lineage>
</organism>
<sequence>MCCVSWNWVLACTFLLIFLSWWNCCNDRISVNSGVPGMAARVAGAHHVVLTEQDELLRLLRVNLAANAEVLTHEIEEEKGGIVARPLSWGIEHTKEYLARYGDEKIDVILSCDCIYEPLYGTSWKGLAQTMELLCLANPKSVVLLAVERRNEDGIDKFLAFVEKETMLLYRRDEVTVGSSKNRLEVYHLHLENILKN</sequence>
<name>RLR48_PLAVT</name>
<dbReference type="SMR" id="P0CV14"/>
<dbReference type="GO" id="GO:0005576">
    <property type="term" value="C:extracellular region"/>
    <property type="evidence" value="ECO:0007669"/>
    <property type="project" value="UniProtKB-SubCell"/>
</dbReference>
<dbReference type="GO" id="GO:0030430">
    <property type="term" value="C:host cell cytoplasm"/>
    <property type="evidence" value="ECO:0007669"/>
    <property type="project" value="UniProtKB-SubCell"/>
</dbReference>
<dbReference type="GO" id="GO:0042025">
    <property type="term" value="C:host cell nucleus"/>
    <property type="evidence" value="ECO:0007669"/>
    <property type="project" value="UniProtKB-SubCell"/>
</dbReference>
<dbReference type="Gene3D" id="3.40.50.150">
    <property type="entry name" value="Vaccinia Virus protein VP39"/>
    <property type="match status" value="1"/>
</dbReference>
<dbReference type="InterPro" id="IPR019410">
    <property type="entry name" value="Methyltransf_16"/>
</dbReference>
<dbReference type="InterPro" id="IPR029063">
    <property type="entry name" value="SAM-dependent_MTases_sf"/>
</dbReference>
<dbReference type="PANTHER" id="PTHR14614">
    <property type="entry name" value="HEPATOCELLULAR CARCINOMA-ASSOCIATED ANTIGEN"/>
    <property type="match status" value="1"/>
</dbReference>
<dbReference type="PANTHER" id="PTHR14614:SF123">
    <property type="entry name" value="OS04G0645500 PROTEIN"/>
    <property type="match status" value="1"/>
</dbReference>
<dbReference type="Pfam" id="PF10294">
    <property type="entry name" value="Methyltransf_16"/>
    <property type="match status" value="1"/>
</dbReference>